<accession>Q8DMM9</accession>
<evidence type="ECO:0000255" key="1">
    <source>
        <dbReference type="HAMAP-Rule" id="MF_01369"/>
    </source>
</evidence>
<evidence type="ECO:0000305" key="2"/>
<name>RL23_THEVB</name>
<comment type="function">
    <text evidence="1">One of the early assembly proteins it binds 23S rRNA. One of the proteins that surrounds the polypeptide exit tunnel on the outside of the ribosome. Forms the main docking site for trigger factor binding to the ribosome.</text>
</comment>
<comment type="subunit">
    <text evidence="1">Part of the 50S ribosomal subunit. Contacts protein L29, and trigger factor when it is bound to the ribosome.</text>
</comment>
<comment type="similarity">
    <text evidence="1">Belongs to the universal ribosomal protein uL23 family.</text>
</comment>
<reference key="1">
    <citation type="journal article" date="2002" name="DNA Res.">
        <title>Complete genome structure of the thermophilic cyanobacterium Thermosynechococcus elongatus BP-1.</title>
        <authorList>
            <person name="Nakamura Y."/>
            <person name="Kaneko T."/>
            <person name="Sato S."/>
            <person name="Ikeuchi M."/>
            <person name="Katoh H."/>
            <person name="Sasamoto S."/>
            <person name="Watanabe A."/>
            <person name="Iriguchi M."/>
            <person name="Kawashima K."/>
            <person name="Kimura T."/>
            <person name="Kishida Y."/>
            <person name="Kiyokawa C."/>
            <person name="Kohara M."/>
            <person name="Matsumoto M."/>
            <person name="Matsuno A."/>
            <person name="Nakazaki N."/>
            <person name="Shimpo S."/>
            <person name="Sugimoto M."/>
            <person name="Takeuchi C."/>
            <person name="Yamada M."/>
            <person name="Tabata S."/>
        </authorList>
    </citation>
    <scope>NUCLEOTIDE SEQUENCE [LARGE SCALE GENOMIC DNA]</scope>
    <source>
        <strain>NIES-2133 / IAM M-273 / BP-1</strain>
    </source>
</reference>
<feature type="chain" id="PRO_0000272855" description="Large ribosomal subunit protein uL23">
    <location>
        <begin position="1"/>
        <end position="100"/>
    </location>
</feature>
<protein>
    <recommendedName>
        <fullName evidence="1">Large ribosomal subunit protein uL23</fullName>
    </recommendedName>
    <alternativeName>
        <fullName evidence="2">50S ribosomal protein L23</fullName>
    </alternativeName>
</protein>
<proteinExistence type="inferred from homology"/>
<keyword id="KW-1185">Reference proteome</keyword>
<keyword id="KW-0687">Ribonucleoprotein</keyword>
<keyword id="KW-0689">Ribosomal protein</keyword>
<keyword id="KW-0694">RNA-binding</keyword>
<keyword id="KW-0699">rRNA-binding</keyword>
<gene>
    <name evidence="1" type="primary">rplW</name>
    <name evidence="1" type="synonym">rpl23</name>
    <name type="ordered locus">tlr0083</name>
</gene>
<dbReference type="EMBL" id="BA000039">
    <property type="protein sequence ID" value="BAC07636.1"/>
    <property type="molecule type" value="Genomic_DNA"/>
</dbReference>
<dbReference type="RefSeq" id="NP_680874.1">
    <property type="nucleotide sequence ID" value="NC_004113.1"/>
</dbReference>
<dbReference type="RefSeq" id="WP_011055938.1">
    <property type="nucleotide sequence ID" value="NC_004113.1"/>
</dbReference>
<dbReference type="SMR" id="Q8DMM9"/>
<dbReference type="STRING" id="197221.gene:10746661"/>
<dbReference type="EnsemblBacteria" id="BAC07636">
    <property type="protein sequence ID" value="BAC07636"/>
    <property type="gene ID" value="BAC07636"/>
</dbReference>
<dbReference type="KEGG" id="tel:tlr0083"/>
<dbReference type="PATRIC" id="fig|197221.4.peg.86"/>
<dbReference type="eggNOG" id="COG0089">
    <property type="taxonomic scope" value="Bacteria"/>
</dbReference>
<dbReference type="Proteomes" id="UP000000440">
    <property type="component" value="Chromosome"/>
</dbReference>
<dbReference type="GO" id="GO:1990904">
    <property type="term" value="C:ribonucleoprotein complex"/>
    <property type="evidence" value="ECO:0007669"/>
    <property type="project" value="UniProtKB-KW"/>
</dbReference>
<dbReference type="GO" id="GO:0005840">
    <property type="term" value="C:ribosome"/>
    <property type="evidence" value="ECO:0007669"/>
    <property type="project" value="UniProtKB-KW"/>
</dbReference>
<dbReference type="GO" id="GO:0019843">
    <property type="term" value="F:rRNA binding"/>
    <property type="evidence" value="ECO:0007669"/>
    <property type="project" value="UniProtKB-UniRule"/>
</dbReference>
<dbReference type="GO" id="GO:0003735">
    <property type="term" value="F:structural constituent of ribosome"/>
    <property type="evidence" value="ECO:0007669"/>
    <property type="project" value="InterPro"/>
</dbReference>
<dbReference type="GO" id="GO:0006412">
    <property type="term" value="P:translation"/>
    <property type="evidence" value="ECO:0007669"/>
    <property type="project" value="UniProtKB-UniRule"/>
</dbReference>
<dbReference type="FunFam" id="3.30.70.330:FF:000001">
    <property type="entry name" value="50S ribosomal protein L23"/>
    <property type="match status" value="1"/>
</dbReference>
<dbReference type="Gene3D" id="3.30.70.330">
    <property type="match status" value="1"/>
</dbReference>
<dbReference type="HAMAP" id="MF_01369_B">
    <property type="entry name" value="Ribosomal_uL23_B"/>
    <property type="match status" value="1"/>
</dbReference>
<dbReference type="InterPro" id="IPR012677">
    <property type="entry name" value="Nucleotide-bd_a/b_plait_sf"/>
</dbReference>
<dbReference type="InterPro" id="IPR013025">
    <property type="entry name" value="Ribosomal_uL23-like"/>
</dbReference>
<dbReference type="InterPro" id="IPR012678">
    <property type="entry name" value="Ribosomal_uL23/eL15/eS24_sf"/>
</dbReference>
<dbReference type="InterPro" id="IPR001014">
    <property type="entry name" value="Ribosomal_uL23_CS"/>
</dbReference>
<dbReference type="NCBIfam" id="NF004363">
    <property type="entry name" value="PRK05738.2-4"/>
    <property type="match status" value="1"/>
</dbReference>
<dbReference type="NCBIfam" id="NF004368">
    <property type="entry name" value="PRK05738.3-4"/>
    <property type="match status" value="1"/>
</dbReference>
<dbReference type="PANTHER" id="PTHR11620">
    <property type="entry name" value="60S RIBOSOMAL PROTEIN L23A"/>
    <property type="match status" value="1"/>
</dbReference>
<dbReference type="Pfam" id="PF00276">
    <property type="entry name" value="Ribosomal_L23"/>
    <property type="match status" value="1"/>
</dbReference>
<dbReference type="SUPFAM" id="SSF54189">
    <property type="entry name" value="Ribosomal proteins S24e, L23 and L15e"/>
    <property type="match status" value="1"/>
</dbReference>
<dbReference type="PROSITE" id="PS00050">
    <property type="entry name" value="RIBOSOMAL_L23"/>
    <property type="match status" value="1"/>
</dbReference>
<sequence length="100" mass="11527">MTKVQPRALADLIKRPIITEKATVLLENNQYTFDVDRRATKPQIKAAIEELFNVKVTAVNTYHLPPKERRVGRFVGRRPRYKRAIVTLAPDSKIVLFPEV</sequence>
<organism>
    <name type="scientific">Thermosynechococcus vestitus (strain NIES-2133 / IAM M-273 / BP-1)</name>
    <dbReference type="NCBI Taxonomy" id="197221"/>
    <lineage>
        <taxon>Bacteria</taxon>
        <taxon>Bacillati</taxon>
        <taxon>Cyanobacteriota</taxon>
        <taxon>Cyanophyceae</taxon>
        <taxon>Acaryochloridales</taxon>
        <taxon>Thermosynechococcaceae</taxon>
        <taxon>Thermosynechococcus</taxon>
    </lineage>
</organism>